<comment type="function">
    <text evidence="6 7 8 9 10 11 12">G-protein coupled receptor for 5-hydroxytryptamine (serotonin) (PubMed:14744596, PubMed:1513320, PubMed:1608964, PubMed:1733778, PubMed:21422162, PubMed:33762731). Also functions as a receptor for various alkaloids and psychoactive substances (PubMed:14744596, PubMed:1513320, PubMed:1608964, PubMed:1733778, PubMed:21422162, PubMed:33762731). Ligand binding causes a conformation change that triggers signaling via guanine nucleotide-binding proteins (G proteins) and modulates the activity of downstream effectors, such as adenylate cyclase (PubMed:14744596, PubMed:1513320, PubMed:1608964, PubMed:1733778, PubMed:21422162, PubMed:33762731). HTR1E is coupled to G(i)/G(o) G alpha proteins and mediates inhibitory neurotransmission by inhibiting adenylate cyclase activity (PubMed:33762731, PubMed:35610220).</text>
</comment>
<comment type="interaction">
    <interactant intactId="EBI-1043151">
        <id>P28566</id>
    </interactant>
    <interactant intactId="EBI-356231">
        <id>P06576</id>
        <label>ATP5F1B</label>
    </interactant>
    <organismsDiffer>false</organismsDiffer>
    <experiments>2</experiments>
</comment>
<comment type="interaction">
    <interactant intactId="EBI-1043151">
        <id>P28566</id>
    </interactant>
    <interactant intactId="EBI-748397">
        <id>P50222</id>
        <label>MEOX2</label>
    </interactant>
    <organismsDiffer>false</organismsDiffer>
    <experiments>3</experiments>
</comment>
<comment type="interaction">
    <interactant intactId="EBI-1043151">
        <id>P28566</id>
    </interactant>
    <interactant intactId="EBI-748974">
        <id>Q96CV9</id>
        <label>OPTN</label>
    </interactant>
    <organismsDiffer>false</organismsDiffer>
    <experiments>3</experiments>
</comment>
<comment type="subcellular location">
    <subcellularLocation>
        <location evidence="6 7 8 9 10">Cell membrane</location>
        <topology evidence="6 7 8 9 10">Multi-pass membrane protein</topology>
    </subcellularLocation>
</comment>
<comment type="tissue specificity">
    <text evidence="6">Detected in brain.</text>
</comment>
<comment type="similarity">
    <text evidence="4">Belongs to the G-protein coupled receptor 1 family.</text>
</comment>
<name>5HT1E_HUMAN</name>
<evidence type="ECO:0000250" key="1">
    <source>
        <dbReference type="UniProtKB" id="P28221"/>
    </source>
</evidence>
<evidence type="ECO:0000250" key="2">
    <source>
        <dbReference type="UniProtKB" id="P41595"/>
    </source>
</evidence>
<evidence type="ECO:0000255" key="3"/>
<evidence type="ECO:0000255" key="4">
    <source>
        <dbReference type="PROSITE-ProRule" id="PRU00521"/>
    </source>
</evidence>
<evidence type="ECO:0000269" key="5">
    <source>
    </source>
</evidence>
<evidence type="ECO:0000269" key="6">
    <source>
    </source>
</evidence>
<evidence type="ECO:0000269" key="7">
    <source>
    </source>
</evidence>
<evidence type="ECO:0000269" key="8">
    <source>
    </source>
</evidence>
<evidence type="ECO:0000269" key="9">
    <source>
    </source>
</evidence>
<evidence type="ECO:0000269" key="10">
    <source>
    </source>
</evidence>
<evidence type="ECO:0000269" key="11">
    <source>
    </source>
</evidence>
<evidence type="ECO:0000269" key="12">
    <source>
    </source>
</evidence>
<evidence type="ECO:0000303" key="13">
    <source>
    </source>
</evidence>
<evidence type="ECO:0000305" key="14"/>
<evidence type="ECO:0000312" key="15">
    <source>
        <dbReference type="HGNC" id="HGNC:5291"/>
    </source>
</evidence>
<evidence type="ECO:0007744" key="16">
    <source>
        <dbReference type="PDB" id="7E33"/>
    </source>
</evidence>
<evidence type="ECO:0007829" key="17">
    <source>
        <dbReference type="PDB" id="7E33"/>
    </source>
</evidence>
<keyword id="KW-0002">3D-structure</keyword>
<keyword id="KW-1003">Cell membrane</keyword>
<keyword id="KW-1015">Disulfide bond</keyword>
<keyword id="KW-0297">G-protein coupled receptor</keyword>
<keyword id="KW-0325">Glycoprotein</keyword>
<keyword id="KW-0472">Membrane</keyword>
<keyword id="KW-1267">Proteomics identification</keyword>
<keyword id="KW-0675">Receptor</keyword>
<keyword id="KW-1185">Reference proteome</keyword>
<keyword id="KW-0807">Transducer</keyword>
<keyword id="KW-0812">Transmembrane</keyword>
<keyword id="KW-1133">Transmembrane helix</keyword>
<protein>
    <recommendedName>
        <fullName evidence="13">5-hydroxytryptamine receptor 1E</fullName>
        <shortName evidence="13">5-HT-1E</shortName>
        <shortName evidence="13">5-HT1E</shortName>
    </recommendedName>
    <alternativeName>
        <fullName>S31</fullName>
    </alternativeName>
    <alternativeName>
        <fullName evidence="13">Serotonin receptor 1E</fullName>
    </alternativeName>
</protein>
<organism>
    <name type="scientific">Homo sapiens</name>
    <name type="common">Human</name>
    <dbReference type="NCBI Taxonomy" id="9606"/>
    <lineage>
        <taxon>Eukaryota</taxon>
        <taxon>Metazoa</taxon>
        <taxon>Chordata</taxon>
        <taxon>Craniata</taxon>
        <taxon>Vertebrata</taxon>
        <taxon>Euteleostomi</taxon>
        <taxon>Mammalia</taxon>
        <taxon>Eutheria</taxon>
        <taxon>Euarchontoglires</taxon>
        <taxon>Primates</taxon>
        <taxon>Haplorrhini</taxon>
        <taxon>Catarrhini</taxon>
        <taxon>Hominidae</taxon>
        <taxon>Homo</taxon>
    </lineage>
</organism>
<dbReference type="EMBL" id="M91467">
    <property type="protein sequence ID" value="AAA58353.1"/>
    <property type="molecule type" value="mRNA"/>
</dbReference>
<dbReference type="EMBL" id="Z11166">
    <property type="protein sequence ID" value="CAA77558.1"/>
    <property type="molecule type" value="Genomic_DNA"/>
</dbReference>
<dbReference type="EMBL" id="M92826">
    <property type="protein sequence ID" value="AAA58355.1"/>
    <property type="molecule type" value="Genomic_DNA"/>
</dbReference>
<dbReference type="EMBL" id="AF498980">
    <property type="protein sequence ID" value="AAM21127.1"/>
    <property type="molecule type" value="mRNA"/>
</dbReference>
<dbReference type="EMBL" id="AL157777">
    <property type="status" value="NOT_ANNOTATED_CDS"/>
    <property type="molecule type" value="Genomic_DNA"/>
</dbReference>
<dbReference type="EMBL" id="CH471051">
    <property type="protein sequence ID" value="EAW48616.1"/>
    <property type="molecule type" value="Genomic_DNA"/>
</dbReference>
<dbReference type="EMBL" id="CH471051">
    <property type="protein sequence ID" value="EAW48617.1"/>
    <property type="molecule type" value="Genomic_DNA"/>
</dbReference>
<dbReference type="EMBL" id="BC069751">
    <property type="protein sequence ID" value="AAH69751.1"/>
    <property type="molecule type" value="mRNA"/>
</dbReference>
<dbReference type="EMBL" id="AB041373">
    <property type="protein sequence ID" value="BAA94458.1"/>
    <property type="molecule type" value="Genomic_DNA"/>
</dbReference>
<dbReference type="CCDS" id="CCDS5006.1"/>
<dbReference type="PIR" id="S20579">
    <property type="entry name" value="A45260"/>
</dbReference>
<dbReference type="RefSeq" id="NP_000856.1">
    <property type="nucleotide sequence ID" value="NM_000865.3"/>
</dbReference>
<dbReference type="RefSeq" id="XP_011534091.1">
    <property type="nucleotide sequence ID" value="XM_011535789.3"/>
</dbReference>
<dbReference type="RefSeq" id="XP_054211290.1">
    <property type="nucleotide sequence ID" value="XM_054355315.1"/>
</dbReference>
<dbReference type="PDB" id="7E33">
    <property type="method" value="EM"/>
    <property type="resolution" value="2.90 A"/>
    <property type="chains" value="R=2-365"/>
</dbReference>
<dbReference type="PDB" id="8UGY">
    <property type="method" value="EM"/>
    <property type="resolution" value="3.31 A"/>
    <property type="chains" value="R=20-358"/>
</dbReference>
<dbReference type="PDB" id="8UH3">
    <property type="method" value="EM"/>
    <property type="resolution" value="3.31 A"/>
    <property type="chains" value="D=1-365"/>
</dbReference>
<dbReference type="PDBsum" id="7E33"/>
<dbReference type="PDBsum" id="8UGY"/>
<dbReference type="PDBsum" id="8UH3"/>
<dbReference type="EMDB" id="EMD-30975"/>
<dbReference type="EMDB" id="EMD-42241"/>
<dbReference type="EMDB" id="EMD-42245"/>
<dbReference type="SMR" id="P28566"/>
<dbReference type="BioGRID" id="109586">
    <property type="interactions" value="8"/>
</dbReference>
<dbReference type="CORUM" id="P28566"/>
<dbReference type="FunCoup" id="P28566">
    <property type="interactions" value="919"/>
</dbReference>
<dbReference type="IntAct" id="P28566">
    <property type="interactions" value="7"/>
</dbReference>
<dbReference type="STRING" id="9606.ENSP00000307766"/>
<dbReference type="BindingDB" id="P28566"/>
<dbReference type="ChEMBL" id="CHEMBL2182"/>
<dbReference type="DrugBank" id="DB01238">
    <property type="generic name" value="Aripiprazole"/>
</dbReference>
<dbReference type="DrugBank" id="DB14185">
    <property type="generic name" value="Aripiprazole lauroxil"/>
</dbReference>
<dbReference type="DrugBank" id="DB01239">
    <property type="generic name" value="Chlorprothixene"/>
</dbReference>
<dbReference type="DrugBank" id="DB00363">
    <property type="generic name" value="Clozapine"/>
</dbReference>
<dbReference type="DrugBank" id="DB11273">
    <property type="generic name" value="Dihydroergocornine"/>
</dbReference>
<dbReference type="DrugBank" id="DB13345">
    <property type="generic name" value="Dihydroergocristine"/>
</dbReference>
<dbReference type="DrugBank" id="DB00320">
    <property type="generic name" value="Dihydroergotamine"/>
</dbReference>
<dbReference type="DrugBank" id="DB01049">
    <property type="generic name" value="Ergoloid mesylate"/>
</dbReference>
<dbReference type="DrugBank" id="DB12141">
    <property type="generic name" value="Gilteritinib"/>
</dbReference>
<dbReference type="DrugBank" id="DB01221">
    <property type="generic name" value="Ketamine"/>
</dbReference>
<dbReference type="DrugBank" id="DB12540">
    <property type="generic name" value="Lecozotan"/>
</dbReference>
<dbReference type="DrugBank" id="DB00408">
    <property type="generic name" value="Loxapine"/>
</dbReference>
<dbReference type="DrugBank" id="DB12110">
    <property type="generic name" value="m-Chlorophenylpiperazine"/>
</dbReference>
<dbReference type="DrugBank" id="DB13520">
    <property type="generic name" value="Metergoline"/>
</dbReference>
<dbReference type="DrugBank" id="DB00247">
    <property type="generic name" value="Methysergide"/>
</dbReference>
<dbReference type="DrugBank" id="DB00334">
    <property type="generic name" value="Olanzapine"/>
</dbReference>
<dbReference type="DrugBank" id="DB00715">
    <property type="generic name" value="Paroxetine"/>
</dbReference>
<dbReference type="DrugBank" id="DB01224">
    <property type="generic name" value="Quetiapine"/>
</dbReference>
<dbReference type="DrugBank" id="DB00953">
    <property type="generic name" value="Rizatriptan"/>
</dbReference>
<dbReference type="DrugBank" id="DB09304">
    <property type="generic name" value="Setiptiline"/>
</dbReference>
<dbReference type="DrugBank" id="DB13025">
    <property type="generic name" value="Tiapride"/>
</dbReference>
<dbReference type="DrugBank" id="DB00246">
    <property type="generic name" value="Ziprasidone"/>
</dbReference>
<dbReference type="DrugBank" id="DB00315">
    <property type="generic name" value="Zolmitriptan"/>
</dbReference>
<dbReference type="DrugCentral" id="P28566"/>
<dbReference type="GuidetoPHARMACOLOGY" id="4"/>
<dbReference type="GlyCosmos" id="P28566">
    <property type="glycosylation" value="2 sites, No reported glycans"/>
</dbReference>
<dbReference type="GlyGen" id="P28566">
    <property type="glycosylation" value="3 sites"/>
</dbReference>
<dbReference type="iPTMnet" id="P28566"/>
<dbReference type="PhosphoSitePlus" id="P28566"/>
<dbReference type="BioMuta" id="HTR1E"/>
<dbReference type="DMDM" id="112822"/>
<dbReference type="PaxDb" id="9606-ENSP00000307766"/>
<dbReference type="PeptideAtlas" id="P28566"/>
<dbReference type="Antibodypedia" id="1480">
    <property type="antibodies" value="183 antibodies from 31 providers"/>
</dbReference>
<dbReference type="DNASU" id="3354"/>
<dbReference type="Ensembl" id="ENST00000305344.7">
    <property type="protein sequence ID" value="ENSP00000307766.4"/>
    <property type="gene ID" value="ENSG00000168830.8"/>
</dbReference>
<dbReference type="GeneID" id="3354"/>
<dbReference type="KEGG" id="hsa:3354"/>
<dbReference type="MANE-Select" id="ENST00000305344.7">
    <property type="protein sequence ID" value="ENSP00000307766.4"/>
    <property type="RefSeq nucleotide sequence ID" value="NM_000865.3"/>
    <property type="RefSeq protein sequence ID" value="NP_000856.1"/>
</dbReference>
<dbReference type="UCSC" id="uc003pli.4">
    <property type="organism name" value="human"/>
</dbReference>
<dbReference type="AGR" id="HGNC:5291"/>
<dbReference type="CTD" id="3354"/>
<dbReference type="DisGeNET" id="3354"/>
<dbReference type="GeneCards" id="HTR1E"/>
<dbReference type="HGNC" id="HGNC:5291">
    <property type="gene designation" value="HTR1E"/>
</dbReference>
<dbReference type="HPA" id="ENSG00000168830">
    <property type="expression patterns" value="Tissue enhanced (brain, ovary)"/>
</dbReference>
<dbReference type="MIM" id="182132">
    <property type="type" value="gene"/>
</dbReference>
<dbReference type="neXtProt" id="NX_P28566"/>
<dbReference type="OpenTargets" id="ENSG00000168830"/>
<dbReference type="PharmGKB" id="PA29552"/>
<dbReference type="VEuPathDB" id="HostDB:ENSG00000168830"/>
<dbReference type="eggNOG" id="KOG3656">
    <property type="taxonomic scope" value="Eukaryota"/>
</dbReference>
<dbReference type="GeneTree" id="ENSGT01010000222287"/>
<dbReference type="HOGENOM" id="CLU_009579_11_1_1"/>
<dbReference type="InParanoid" id="P28566"/>
<dbReference type="OMA" id="IHTSIRI"/>
<dbReference type="OrthoDB" id="5956310at2759"/>
<dbReference type="PAN-GO" id="P28566">
    <property type="GO annotations" value="8 GO annotations based on evolutionary models"/>
</dbReference>
<dbReference type="PhylomeDB" id="P28566"/>
<dbReference type="TreeFam" id="TF316350"/>
<dbReference type="PathwayCommons" id="P28566"/>
<dbReference type="Reactome" id="R-HSA-390666">
    <property type="pathway name" value="Serotonin receptors"/>
</dbReference>
<dbReference type="Reactome" id="R-HSA-418594">
    <property type="pathway name" value="G alpha (i) signalling events"/>
</dbReference>
<dbReference type="SignaLink" id="P28566"/>
<dbReference type="SIGNOR" id="P28566"/>
<dbReference type="BioGRID-ORCS" id="3354">
    <property type="hits" value="13 hits in 1145 CRISPR screens"/>
</dbReference>
<dbReference type="ChiTaRS" id="HTR1E">
    <property type="organism name" value="human"/>
</dbReference>
<dbReference type="GeneWiki" id="5-HT1E_receptor"/>
<dbReference type="GenomeRNAi" id="3354"/>
<dbReference type="Pharos" id="P28566">
    <property type="development level" value="Tchem"/>
</dbReference>
<dbReference type="PRO" id="PR:P28566"/>
<dbReference type="Proteomes" id="UP000005640">
    <property type="component" value="Chromosome 6"/>
</dbReference>
<dbReference type="RNAct" id="P28566">
    <property type="molecule type" value="protein"/>
</dbReference>
<dbReference type="Bgee" id="ENSG00000168830">
    <property type="expression patterns" value="Expressed in primordial germ cell in gonad and 53 other cell types or tissues"/>
</dbReference>
<dbReference type="GO" id="GO:0030425">
    <property type="term" value="C:dendrite"/>
    <property type="evidence" value="ECO:0000318"/>
    <property type="project" value="GO_Central"/>
</dbReference>
<dbReference type="GO" id="GO:0005886">
    <property type="term" value="C:plasma membrane"/>
    <property type="evidence" value="ECO:0000315"/>
    <property type="project" value="UniProtKB"/>
</dbReference>
<dbReference type="GO" id="GO:0045202">
    <property type="term" value="C:synapse"/>
    <property type="evidence" value="ECO:0007669"/>
    <property type="project" value="GOC"/>
</dbReference>
<dbReference type="GO" id="GO:0004930">
    <property type="term" value="F:G protein-coupled receptor activity"/>
    <property type="evidence" value="ECO:0000304"/>
    <property type="project" value="ProtInc"/>
</dbReference>
<dbReference type="GO" id="GO:0004993">
    <property type="term" value="F:G protein-coupled serotonin receptor activity"/>
    <property type="evidence" value="ECO:0000314"/>
    <property type="project" value="MGI"/>
</dbReference>
<dbReference type="GO" id="GO:0001586">
    <property type="term" value="F:Gi/o-coupled serotonin receptor activity"/>
    <property type="evidence" value="ECO:0000314"/>
    <property type="project" value="UniProtKB"/>
</dbReference>
<dbReference type="GO" id="GO:0030594">
    <property type="term" value="F:neurotransmitter receptor activity"/>
    <property type="evidence" value="ECO:0000318"/>
    <property type="project" value="GO_Central"/>
</dbReference>
<dbReference type="GO" id="GO:0051378">
    <property type="term" value="F:serotonin binding"/>
    <property type="evidence" value="ECO:0000314"/>
    <property type="project" value="MGI"/>
</dbReference>
<dbReference type="GO" id="GO:0099589">
    <property type="term" value="F:serotonin receptor activity"/>
    <property type="evidence" value="ECO:0000314"/>
    <property type="project" value="UniProt"/>
</dbReference>
<dbReference type="GO" id="GO:0007193">
    <property type="term" value="P:adenylate cyclase-inhibiting G protein-coupled receptor signaling pathway"/>
    <property type="evidence" value="ECO:0000315"/>
    <property type="project" value="UniProtKB"/>
</dbReference>
<dbReference type="GO" id="GO:0007198">
    <property type="term" value="P:adenylate cyclase-inhibiting serotonin receptor signaling pathway"/>
    <property type="evidence" value="ECO:0000314"/>
    <property type="project" value="UniProtKB"/>
</dbReference>
<dbReference type="GO" id="GO:0007268">
    <property type="term" value="P:chemical synaptic transmission"/>
    <property type="evidence" value="ECO:0000318"/>
    <property type="project" value="GO_Central"/>
</dbReference>
<dbReference type="GO" id="GO:0007186">
    <property type="term" value="P:G protein-coupled receptor signaling pathway"/>
    <property type="evidence" value="ECO:0000304"/>
    <property type="project" value="ProtInc"/>
</dbReference>
<dbReference type="GO" id="GO:0007187">
    <property type="term" value="P:G protein-coupled receptor signaling pathway, coupled to cyclic nucleotide second messenger"/>
    <property type="evidence" value="ECO:0000318"/>
    <property type="project" value="GO_Central"/>
</dbReference>
<dbReference type="CDD" id="cd15335">
    <property type="entry name" value="7tmA_5-HT1E"/>
    <property type="match status" value="1"/>
</dbReference>
<dbReference type="FunFam" id="1.20.1070.10:FF:000085">
    <property type="entry name" value="5-hydroxytryptamine receptor 1F"/>
    <property type="match status" value="1"/>
</dbReference>
<dbReference type="Gene3D" id="1.20.1070.10">
    <property type="entry name" value="Rhodopsin 7-helix transmembrane proteins"/>
    <property type="match status" value="1"/>
</dbReference>
<dbReference type="InterPro" id="IPR002231">
    <property type="entry name" value="5HT_rcpt"/>
</dbReference>
<dbReference type="InterPro" id="IPR000276">
    <property type="entry name" value="GPCR_Rhodpsn"/>
</dbReference>
<dbReference type="InterPro" id="IPR017452">
    <property type="entry name" value="GPCR_Rhodpsn_7TM"/>
</dbReference>
<dbReference type="PANTHER" id="PTHR24248:SF196">
    <property type="entry name" value="5-HYDROXYTRYPTAMINE RECEPTOR 1D"/>
    <property type="match status" value="1"/>
</dbReference>
<dbReference type="PANTHER" id="PTHR24248">
    <property type="entry name" value="ADRENERGIC RECEPTOR-RELATED G-PROTEIN COUPLED RECEPTOR"/>
    <property type="match status" value="1"/>
</dbReference>
<dbReference type="Pfam" id="PF00001">
    <property type="entry name" value="7tm_1"/>
    <property type="match status" value="1"/>
</dbReference>
<dbReference type="PRINTS" id="PR01101">
    <property type="entry name" value="5HTRECEPTOR"/>
</dbReference>
<dbReference type="PRINTS" id="PR00237">
    <property type="entry name" value="GPCRRHODOPSN"/>
</dbReference>
<dbReference type="SMART" id="SM01381">
    <property type="entry name" value="7TM_GPCR_Srsx"/>
    <property type="match status" value="1"/>
</dbReference>
<dbReference type="SUPFAM" id="SSF81321">
    <property type="entry name" value="Family A G protein-coupled receptor-like"/>
    <property type="match status" value="1"/>
</dbReference>
<dbReference type="PROSITE" id="PS00237">
    <property type="entry name" value="G_PROTEIN_RECEP_F1_1"/>
    <property type="match status" value="1"/>
</dbReference>
<dbReference type="PROSITE" id="PS50262">
    <property type="entry name" value="G_PROTEIN_RECEP_F1_2"/>
    <property type="match status" value="1"/>
</dbReference>
<reference key="1">
    <citation type="journal article" date="1992" name="Proc. Natl. Acad. Sci. U.S.A.">
        <title>Molecular cloning of a serotonin receptor from human brain (5HT1E): a fifth 5HT1-like subtype.</title>
        <authorList>
            <person name="McAllister G."/>
            <person name="Charlesworth A."/>
            <person name="Snodin C."/>
            <person name="Beer M.S."/>
            <person name="Noble A.J."/>
            <person name="Middlemiss D.N."/>
            <person name="Iversen L.L."/>
            <person name="Whiting P."/>
        </authorList>
    </citation>
    <scope>NUCLEOTIDE SEQUENCE [MRNA]</scope>
    <scope>FUNCTION</scope>
    <scope>SUBCELLULAR LOCATION</scope>
    <source>
        <tissue>Brain</tissue>
    </source>
</reference>
<reference key="2">
    <citation type="journal article" date="1992" name="FEBS Lett.">
        <title>Molecular cloning of a human gene (S31) encoding a novel serotonin receptor mediating inhibition of adenylyl cyclase.</title>
        <authorList>
            <person name="Levy F.O."/>
            <person name="Gudermann T."/>
            <person name="Birnbaumer M."/>
            <person name="Kaumann A.J."/>
            <person name="Birnbaumer L."/>
        </authorList>
    </citation>
    <scope>NUCLEOTIDE SEQUENCE [GENOMIC DNA]</scope>
    <scope>FUNCTION</scope>
    <scope>SUBCELLULAR LOCATION</scope>
</reference>
<reference key="3">
    <citation type="journal article" date="1992" name="Mol. Pharmacol.">
        <title>Human gene S31 encodes the pharmacologically defined serotonin 5-hydroxytryptamine1E receptor.</title>
        <authorList>
            <person name="Zgombick J.M."/>
            <person name="Schechter L.E."/>
            <person name="Macchi M."/>
            <person name="Hartig P.R."/>
            <person name="Branchek T.A."/>
            <person name="Weinshank R.L."/>
        </authorList>
    </citation>
    <scope>NUCLEOTIDE SEQUENCE [GENOMIC DNA]</scope>
    <scope>FUNCTION</scope>
    <scope>SUBCELLULAR LOCATION</scope>
</reference>
<reference key="4">
    <citation type="submission" date="2002-04" db="EMBL/GenBank/DDBJ databases">
        <title>cDNA clones of human proteins involved in signal transduction sequenced by the Guthrie cDNA resource center (www.cdna.org).</title>
        <authorList>
            <person name="Puhl H.L. III"/>
            <person name="Ikeda S.R."/>
            <person name="Aronstam R.S."/>
        </authorList>
    </citation>
    <scope>NUCLEOTIDE SEQUENCE [LARGE SCALE MRNA]</scope>
    <source>
        <tissue>Brain</tissue>
    </source>
</reference>
<reference key="5">
    <citation type="journal article" date="2003" name="Nature">
        <title>The DNA sequence and analysis of human chromosome 6.</title>
        <authorList>
            <person name="Mungall A.J."/>
            <person name="Palmer S.A."/>
            <person name="Sims S.K."/>
            <person name="Edwards C.A."/>
            <person name="Ashurst J.L."/>
            <person name="Wilming L."/>
            <person name="Jones M.C."/>
            <person name="Horton R."/>
            <person name="Hunt S.E."/>
            <person name="Scott C.E."/>
            <person name="Gilbert J.G.R."/>
            <person name="Clamp M.E."/>
            <person name="Bethel G."/>
            <person name="Milne S."/>
            <person name="Ainscough R."/>
            <person name="Almeida J.P."/>
            <person name="Ambrose K.D."/>
            <person name="Andrews T.D."/>
            <person name="Ashwell R.I.S."/>
            <person name="Babbage A.K."/>
            <person name="Bagguley C.L."/>
            <person name="Bailey J."/>
            <person name="Banerjee R."/>
            <person name="Barker D.J."/>
            <person name="Barlow K.F."/>
            <person name="Bates K."/>
            <person name="Beare D.M."/>
            <person name="Beasley H."/>
            <person name="Beasley O."/>
            <person name="Bird C.P."/>
            <person name="Blakey S.E."/>
            <person name="Bray-Allen S."/>
            <person name="Brook J."/>
            <person name="Brown A.J."/>
            <person name="Brown J.Y."/>
            <person name="Burford D.C."/>
            <person name="Burrill W."/>
            <person name="Burton J."/>
            <person name="Carder C."/>
            <person name="Carter N.P."/>
            <person name="Chapman J.C."/>
            <person name="Clark S.Y."/>
            <person name="Clark G."/>
            <person name="Clee C.M."/>
            <person name="Clegg S."/>
            <person name="Cobley V."/>
            <person name="Collier R.E."/>
            <person name="Collins J.E."/>
            <person name="Colman L.K."/>
            <person name="Corby N.R."/>
            <person name="Coville G.J."/>
            <person name="Culley K.M."/>
            <person name="Dhami P."/>
            <person name="Davies J."/>
            <person name="Dunn M."/>
            <person name="Earthrowl M.E."/>
            <person name="Ellington A.E."/>
            <person name="Evans K.A."/>
            <person name="Faulkner L."/>
            <person name="Francis M.D."/>
            <person name="Frankish A."/>
            <person name="Frankland J."/>
            <person name="French L."/>
            <person name="Garner P."/>
            <person name="Garnett J."/>
            <person name="Ghori M.J."/>
            <person name="Gilby L.M."/>
            <person name="Gillson C.J."/>
            <person name="Glithero R.J."/>
            <person name="Grafham D.V."/>
            <person name="Grant M."/>
            <person name="Gribble S."/>
            <person name="Griffiths C."/>
            <person name="Griffiths M.N.D."/>
            <person name="Hall R."/>
            <person name="Halls K.S."/>
            <person name="Hammond S."/>
            <person name="Harley J.L."/>
            <person name="Hart E.A."/>
            <person name="Heath P.D."/>
            <person name="Heathcott R."/>
            <person name="Holmes S.J."/>
            <person name="Howden P.J."/>
            <person name="Howe K.L."/>
            <person name="Howell G.R."/>
            <person name="Huckle E."/>
            <person name="Humphray S.J."/>
            <person name="Humphries M.D."/>
            <person name="Hunt A.R."/>
            <person name="Johnson C.M."/>
            <person name="Joy A.A."/>
            <person name="Kay M."/>
            <person name="Keenan S.J."/>
            <person name="Kimberley A.M."/>
            <person name="King A."/>
            <person name="Laird G.K."/>
            <person name="Langford C."/>
            <person name="Lawlor S."/>
            <person name="Leongamornlert D.A."/>
            <person name="Leversha M."/>
            <person name="Lloyd C.R."/>
            <person name="Lloyd D.M."/>
            <person name="Loveland J.E."/>
            <person name="Lovell J."/>
            <person name="Martin S."/>
            <person name="Mashreghi-Mohammadi M."/>
            <person name="Maslen G.L."/>
            <person name="Matthews L."/>
            <person name="McCann O.T."/>
            <person name="McLaren S.J."/>
            <person name="McLay K."/>
            <person name="McMurray A."/>
            <person name="Moore M.J.F."/>
            <person name="Mullikin J.C."/>
            <person name="Niblett D."/>
            <person name="Nickerson T."/>
            <person name="Novik K.L."/>
            <person name="Oliver K."/>
            <person name="Overton-Larty E.K."/>
            <person name="Parker A."/>
            <person name="Patel R."/>
            <person name="Pearce A.V."/>
            <person name="Peck A.I."/>
            <person name="Phillimore B.J.C.T."/>
            <person name="Phillips S."/>
            <person name="Plumb R.W."/>
            <person name="Porter K.M."/>
            <person name="Ramsey Y."/>
            <person name="Ranby S.A."/>
            <person name="Rice C.M."/>
            <person name="Ross M.T."/>
            <person name="Searle S.M."/>
            <person name="Sehra H.K."/>
            <person name="Sheridan E."/>
            <person name="Skuce C.D."/>
            <person name="Smith S."/>
            <person name="Smith M."/>
            <person name="Spraggon L."/>
            <person name="Squares S.L."/>
            <person name="Steward C.A."/>
            <person name="Sycamore N."/>
            <person name="Tamlyn-Hall G."/>
            <person name="Tester J."/>
            <person name="Theaker A.J."/>
            <person name="Thomas D.W."/>
            <person name="Thorpe A."/>
            <person name="Tracey A."/>
            <person name="Tromans A."/>
            <person name="Tubby B."/>
            <person name="Wall M."/>
            <person name="Wallis J.M."/>
            <person name="West A.P."/>
            <person name="White S.S."/>
            <person name="Whitehead S.L."/>
            <person name="Whittaker H."/>
            <person name="Wild A."/>
            <person name="Willey D.J."/>
            <person name="Wilmer T.E."/>
            <person name="Wood J.M."/>
            <person name="Wray P.W."/>
            <person name="Wyatt J.C."/>
            <person name="Young L."/>
            <person name="Younger R.M."/>
            <person name="Bentley D.R."/>
            <person name="Coulson A."/>
            <person name="Durbin R.M."/>
            <person name="Hubbard T."/>
            <person name="Sulston J.E."/>
            <person name="Dunham I."/>
            <person name="Rogers J."/>
            <person name="Beck S."/>
        </authorList>
    </citation>
    <scope>NUCLEOTIDE SEQUENCE [LARGE SCALE GENOMIC DNA]</scope>
</reference>
<reference key="6">
    <citation type="submission" date="2005-09" db="EMBL/GenBank/DDBJ databases">
        <authorList>
            <person name="Mural R.J."/>
            <person name="Istrail S."/>
            <person name="Sutton G.G."/>
            <person name="Florea L."/>
            <person name="Halpern A.L."/>
            <person name="Mobarry C.M."/>
            <person name="Lippert R."/>
            <person name="Walenz B."/>
            <person name="Shatkay H."/>
            <person name="Dew I."/>
            <person name="Miller J.R."/>
            <person name="Flanigan M.J."/>
            <person name="Edwards N.J."/>
            <person name="Bolanos R."/>
            <person name="Fasulo D."/>
            <person name="Halldorsson B.V."/>
            <person name="Hannenhalli S."/>
            <person name="Turner R."/>
            <person name="Yooseph S."/>
            <person name="Lu F."/>
            <person name="Nusskern D.R."/>
            <person name="Shue B.C."/>
            <person name="Zheng X.H."/>
            <person name="Zhong F."/>
            <person name="Delcher A.L."/>
            <person name="Huson D.H."/>
            <person name="Kravitz S.A."/>
            <person name="Mouchard L."/>
            <person name="Reinert K."/>
            <person name="Remington K.A."/>
            <person name="Clark A.G."/>
            <person name="Waterman M.S."/>
            <person name="Eichler E.E."/>
            <person name="Adams M.D."/>
            <person name="Hunkapiller M.W."/>
            <person name="Myers E.W."/>
            <person name="Venter J.C."/>
        </authorList>
    </citation>
    <scope>NUCLEOTIDE SEQUENCE [LARGE SCALE GENOMIC DNA]</scope>
</reference>
<reference key="7">
    <citation type="journal article" date="2004" name="Genome Res.">
        <title>The status, quality, and expansion of the NIH full-length cDNA project: the Mammalian Gene Collection (MGC).</title>
        <authorList>
            <consortium name="The MGC Project Team"/>
        </authorList>
    </citation>
    <scope>NUCLEOTIDE SEQUENCE [LARGE SCALE MRNA]</scope>
</reference>
<reference key="8">
    <citation type="journal article" date="2004" name="Mol. Biol. Evol.">
        <title>Human-specific amino acid changes found in 103 protein-coding genes.</title>
        <authorList>
            <person name="Kitano T."/>
            <person name="Liu Y.-H."/>
            <person name="Ueda S."/>
            <person name="Saitou N."/>
        </authorList>
    </citation>
    <scope>NUCLEOTIDE SEQUENCE [GENOMIC DNA] OF 1-363</scope>
</reference>
<reference key="9">
    <citation type="journal article" date="2004" name="Eur. J. Pharmacol.">
        <title>Molecular cloning and pharmacological characterization of the guinea pig 5-HT1E receptor.</title>
        <authorList>
            <person name="Bai F."/>
            <person name="Yin T."/>
            <person name="Johnstone E.M."/>
            <person name="Su C."/>
            <person name="Varga G."/>
            <person name="Little S.P."/>
            <person name="Nelson D.L."/>
        </authorList>
    </citation>
    <scope>FUNCTION</scope>
    <scope>SUBCELLULAR LOCATION</scope>
    <scope>TISSUE SPECIFICITY</scope>
</reference>
<reference key="10">
    <citation type="journal article" date="2008" name="Chem. Rev.">
        <title>Serotonin receptors.</title>
        <authorList>
            <person name="Nichols D.E."/>
            <person name="Nichols C.D."/>
        </authorList>
    </citation>
    <scope>REVIEW</scope>
</reference>
<reference key="11">
    <citation type="journal article" date="2011" name="J. Pharmacol. Exp. Ther.">
        <title>Toward selective drug development for the human 5-hydroxytryptamine 1E receptor: a comparison of 5-hydroxytryptamine 1E and 1F receptor structure-affinity relationships.</title>
        <authorList>
            <person name="Klein M.T."/>
            <person name="Dukat M."/>
            <person name="Glennon R.A."/>
            <person name="Teitler M."/>
        </authorList>
    </citation>
    <scope>FUNCTION</scope>
    <scope>SUBCELLULAR LOCATION</scope>
</reference>
<reference key="12">
    <citation type="journal article" date="2011" name="Physiol. Res.">
        <title>Serotonin receptors - from molecular biology to clinical applications.</title>
        <authorList>
            <person name="Pytliak M."/>
            <person name="Vargova V."/>
            <person name="Mechirova V."/>
            <person name="Felsoci M."/>
        </authorList>
    </citation>
    <scope>REVIEW</scope>
</reference>
<reference key="13">
    <citation type="journal article" date="2022" name="Cell Discov.">
        <title>Structural insights into the ligand binding and Gi coupling of serotonin receptor 5-HT5A.</title>
        <authorList>
            <person name="Tan Y."/>
            <person name="Xu P."/>
            <person name="Huang S."/>
            <person name="Yang G."/>
            <person name="Zhou F."/>
            <person name="He X."/>
            <person name="Ma H."/>
            <person name="Xu H.E."/>
            <person name="Jiang Y."/>
        </authorList>
    </citation>
    <scope>FUNCTION</scope>
    <scope>MUTAGENESIS OF GLU-311</scope>
</reference>
<reference evidence="16" key="14">
    <citation type="journal article" date="2021" name="Nature">
        <title>Structural insights into the lipid and ligand regulation of serotonin receptors.</title>
        <authorList>
            <person name="Xu P."/>
            <person name="Huang S."/>
            <person name="Zhang H."/>
            <person name="Mao C."/>
            <person name="Zhou X.E."/>
            <person name="Cheng X."/>
            <person name="Simon I.A."/>
            <person name="Shen D.D."/>
            <person name="Yen H.Y."/>
            <person name="Robinson C.V."/>
            <person name="Harpsoee K."/>
            <person name="Svensson B."/>
            <person name="Guo J."/>
            <person name="Jiang H."/>
            <person name="Gloriam D.E."/>
            <person name="Melcher K."/>
            <person name="Jiang Y."/>
            <person name="Zhang Y."/>
            <person name="Xu H.E."/>
        </authorList>
    </citation>
    <scope>STRUCTURE BY ELECTRON MICROSCOPY (3.0 ANGSTROMS) OF 2-365 IN COMPLEX WITH GNAI1; GNB1 AND GNG2</scope>
    <scope>FUNCTION</scope>
</reference>
<reference key="15">
    <citation type="journal article" date="1999" name="Nat. Genet.">
        <title>Characterization of single-nucleotide polymorphisms in coding regions of human genes.</title>
        <authorList>
            <person name="Cargill M."/>
            <person name="Altshuler D."/>
            <person name="Ireland J."/>
            <person name="Sklar P."/>
            <person name="Ardlie K."/>
            <person name="Patil N."/>
            <person name="Shaw N."/>
            <person name="Lane C.R."/>
            <person name="Lim E.P."/>
            <person name="Kalyanaraman N."/>
            <person name="Nemesh J."/>
            <person name="Ziaugra L."/>
            <person name="Friedland L."/>
            <person name="Rolfe A."/>
            <person name="Warrington J."/>
            <person name="Lipshutz R."/>
            <person name="Daley G.Q."/>
            <person name="Lander E.S."/>
        </authorList>
    </citation>
    <scope>VARIANT PHE-262</scope>
</reference>
<reference key="16">
    <citation type="journal article" date="1999" name="Nat. Genet.">
        <authorList>
            <person name="Cargill M."/>
            <person name="Altshuler D."/>
            <person name="Ireland J."/>
            <person name="Sklar P."/>
            <person name="Ardlie K."/>
            <person name="Patil N."/>
            <person name="Shaw N."/>
            <person name="Lane C.R."/>
            <person name="Lim E.P."/>
            <person name="Kalyanaraman N."/>
            <person name="Nemesh J."/>
            <person name="Ziaugra L."/>
            <person name="Friedland L."/>
            <person name="Rolfe A."/>
            <person name="Warrington J."/>
            <person name="Lipshutz R."/>
            <person name="Daley G.Q."/>
            <person name="Lander E.S."/>
        </authorList>
    </citation>
    <scope>ERRATUM OF PUBMED:10391209</scope>
</reference>
<proteinExistence type="evidence at protein level"/>
<feature type="chain" id="PRO_0000068933" description="5-hydroxytryptamine receptor 1E">
    <location>
        <begin position="1"/>
        <end position="365"/>
    </location>
</feature>
<feature type="topological domain" description="Extracellular" evidence="11 14 16">
    <location>
        <begin position="1"/>
        <end position="21"/>
    </location>
</feature>
<feature type="transmembrane region" description="Helical; Name=1" evidence="11 16">
    <location>
        <begin position="22"/>
        <end position="45"/>
    </location>
</feature>
<feature type="topological domain" description="Cytoplasmic" evidence="11 16">
    <location>
        <begin position="46"/>
        <end position="59"/>
    </location>
</feature>
<feature type="transmembrane region" description="Helical; Name=2" evidence="11 16">
    <location>
        <begin position="60"/>
        <end position="84"/>
    </location>
</feature>
<feature type="topological domain" description="Extracellular" evidence="11 16">
    <location>
        <begin position="85"/>
        <end position="92"/>
    </location>
</feature>
<feature type="transmembrane region" description="Helical; Name=3" evidence="11 16">
    <location>
        <begin position="93"/>
        <end position="118"/>
    </location>
</feature>
<feature type="topological domain" description="Cytoplasmic" evidence="11 16">
    <location>
        <begin position="119"/>
        <end position="138"/>
    </location>
</feature>
<feature type="transmembrane region" description="Helical; Name=4" evidence="11 16">
    <location>
        <begin position="139"/>
        <end position="157"/>
    </location>
</feature>
<feature type="topological domain" description="Extracellular" evidence="11 16">
    <location>
        <begin position="158"/>
        <end position="179"/>
    </location>
</feature>
<feature type="transmembrane region" description="Helical; Name=5" evidence="11 16">
    <location>
        <begin position="180"/>
        <end position="203"/>
    </location>
</feature>
<feature type="topological domain" description="Cytoplasmic" evidence="11 16">
    <location>
        <begin position="204"/>
        <end position="291"/>
    </location>
</feature>
<feature type="transmembrane region" description="Helical; Name=6" evidence="11 16">
    <location>
        <begin position="292"/>
        <end position="316"/>
    </location>
</feature>
<feature type="topological domain" description="Extracellular" evidence="11 16">
    <location>
        <begin position="317"/>
        <end position="322"/>
    </location>
</feature>
<feature type="transmembrane region" description="Helical; Name=7" evidence="11 16">
    <location>
        <begin position="323"/>
        <end position="345"/>
    </location>
</feature>
<feature type="topological domain" description="Cytoplasmic" evidence="11 16">
    <location>
        <begin position="346"/>
        <end position="365"/>
    </location>
</feature>
<feature type="short sequence motif" description="DRY motif; important for ligand-induced conformation changes" evidence="2">
    <location>
        <begin position="119"/>
        <end position="121"/>
    </location>
</feature>
<feature type="short sequence motif" description="NPxxY motif; important for ligand-induced conformation changes and signaling" evidence="2">
    <location>
        <begin position="340"/>
        <end position="344"/>
    </location>
</feature>
<feature type="binding site" evidence="1">
    <location>
        <position position="102"/>
    </location>
    <ligand>
        <name>serotonin</name>
        <dbReference type="ChEBI" id="CHEBI:350546"/>
    </ligand>
</feature>
<feature type="binding site" evidence="1">
    <location>
        <position position="106"/>
    </location>
    <ligand>
        <name>serotonin</name>
        <dbReference type="ChEBI" id="CHEBI:350546"/>
    </ligand>
</feature>
<feature type="glycosylation site" description="N-linked (GlcNAc...) asparagine" evidence="3">
    <location>
        <position position="2"/>
    </location>
</feature>
<feature type="glycosylation site" description="N-linked (GlcNAc...) asparagine" evidence="3">
    <location>
        <position position="5"/>
    </location>
</feature>
<feature type="disulfide bond" evidence="4 11 16">
    <location>
        <begin position="95"/>
        <end position="173"/>
    </location>
</feature>
<feature type="sequence variant" id="VAR_022061" description="In dbSNP:rs3828741.">
    <original>A</original>
    <variation>T</variation>
    <location>
        <position position="208"/>
    </location>
</feature>
<feature type="sequence variant" id="VAR_014165" description="In dbSNP:rs6303." evidence="5">
    <original>S</original>
    <variation>F</variation>
    <location>
        <position position="262"/>
    </location>
</feature>
<feature type="mutagenesis site" description="Increased G(i)/(o)-coupled receptor activity." evidence="12">
    <original>E</original>
    <variation>A</variation>
    <location>
        <position position="311"/>
    </location>
</feature>
<feature type="helix" evidence="17">
    <location>
        <begin position="21"/>
        <end position="49"/>
    </location>
</feature>
<feature type="helix" evidence="17">
    <location>
        <begin position="51"/>
        <end position="53"/>
    </location>
</feature>
<feature type="helix" evidence="17">
    <location>
        <begin position="56"/>
        <end position="74"/>
    </location>
</feature>
<feature type="helix" evidence="17">
    <location>
        <begin position="76"/>
        <end position="84"/>
    </location>
</feature>
<feature type="helix" evidence="17">
    <location>
        <begin position="94"/>
        <end position="125"/>
    </location>
</feature>
<feature type="helix" evidence="17">
    <location>
        <begin position="129"/>
        <end position="133"/>
    </location>
</feature>
<feature type="helix" evidence="17">
    <location>
        <begin position="136"/>
        <end position="154"/>
    </location>
</feature>
<feature type="turn" evidence="17">
    <location>
        <begin position="155"/>
        <end position="157"/>
    </location>
</feature>
<feature type="helix" evidence="17">
    <location>
        <begin position="180"/>
        <end position="190"/>
    </location>
</feature>
<feature type="helix" evidence="17">
    <location>
        <begin position="192"/>
        <end position="211"/>
    </location>
</feature>
<feature type="helix" evidence="17">
    <location>
        <begin position="284"/>
        <end position="315"/>
    </location>
</feature>
<feature type="helix" evidence="17">
    <location>
        <begin position="323"/>
        <end position="345"/>
    </location>
</feature>
<feature type="helix" evidence="17">
    <location>
        <begin position="349"/>
        <end position="357"/>
    </location>
</feature>
<gene>
    <name evidence="15" type="primary">HTR1E</name>
</gene>
<sequence>MNITNCTTEASMAIRPKTITEKMLICMTLVVITTLTTLLNLAVIMAIGTTKKLHQPANYLICSLAVTDLLVAVLVMPLSIIYIVMDRWKLGYFLCEVWLSVDMTCCTCSILHLCVIALDRYWAITNAIEYARKRTAKRAALMILTVWTISIFISMPPLFWRSHRRLSPPPSQCTIQHDHVIYTIYSTLGAFYIPLTLILILYYRIYHAAKSLYQKRGSSRHLSNRSTDSQNSFASCKLTQTFCVSDFSTSDPTTEFEKFHASIRIPPFDNDLDHPGERQQISSTRERKAARILGLILGAFILSWLPFFIKELIVGLSIYTVSSEVADFLTWLGYVNSLINPLLYTSFNEDFKLAFKKLIRCREHT</sequence>
<accession>P28566</accession>
<accession>E1P503</accession>
<accession>Q9P1Y1</accession>